<evidence type="ECO:0000250" key="1"/>
<reference key="1">
    <citation type="journal article" date="1997" name="J. Ind. Microbiol. Biotechnol.">
        <title>Detection and speciation of bacteria through PCR using universal major cold-shock protein primer oligomers.</title>
        <authorList>
            <person name="Francis K.P."/>
            <person name="Stewart G.S.A.B."/>
        </authorList>
    </citation>
    <scope>NUCLEOTIDE SEQUENCE [GENOMIC DNA]</scope>
    <source>
        <strain>NCTC 6071</strain>
        <strain>NCTC 6081 / C.ballerapensis</strain>
    </source>
</reference>
<proteinExistence type="inferred from homology"/>
<dbReference type="EMBL" id="U60032">
    <property type="protein sequence ID" value="AAC80236.1"/>
    <property type="molecule type" value="Genomic_DNA"/>
</dbReference>
<dbReference type="EMBL" id="U60033">
    <property type="protein sequence ID" value="AAC80237.1"/>
    <property type="molecule type" value="Genomic_DNA"/>
</dbReference>
<dbReference type="SMR" id="Q46051"/>
<dbReference type="STRING" id="1333848.CFNIH1_05410"/>
<dbReference type="GO" id="GO:0005829">
    <property type="term" value="C:cytosol"/>
    <property type="evidence" value="ECO:0007669"/>
    <property type="project" value="UniProtKB-ARBA"/>
</dbReference>
<dbReference type="GO" id="GO:0003677">
    <property type="term" value="F:DNA binding"/>
    <property type="evidence" value="ECO:0007669"/>
    <property type="project" value="UniProtKB-KW"/>
</dbReference>
<dbReference type="CDD" id="cd04458">
    <property type="entry name" value="CSP_CDS"/>
    <property type="match status" value="1"/>
</dbReference>
<dbReference type="Gene3D" id="2.40.50.140">
    <property type="entry name" value="Nucleic acid-binding proteins"/>
    <property type="match status" value="1"/>
</dbReference>
<dbReference type="InterPro" id="IPR012156">
    <property type="entry name" value="Cold_shock_CspA"/>
</dbReference>
<dbReference type="InterPro" id="IPR011129">
    <property type="entry name" value="CSD"/>
</dbReference>
<dbReference type="InterPro" id="IPR019844">
    <property type="entry name" value="CSD_CS"/>
</dbReference>
<dbReference type="InterPro" id="IPR002059">
    <property type="entry name" value="CSP_DNA-bd"/>
</dbReference>
<dbReference type="InterPro" id="IPR012340">
    <property type="entry name" value="NA-bd_OB-fold"/>
</dbReference>
<dbReference type="PANTHER" id="PTHR46565">
    <property type="entry name" value="COLD SHOCK DOMAIN PROTEIN 2"/>
    <property type="match status" value="1"/>
</dbReference>
<dbReference type="PANTHER" id="PTHR46565:SF20">
    <property type="entry name" value="COLD SHOCK DOMAIN-CONTAINING PROTEIN 4"/>
    <property type="match status" value="1"/>
</dbReference>
<dbReference type="Pfam" id="PF00313">
    <property type="entry name" value="CSD"/>
    <property type="match status" value="1"/>
</dbReference>
<dbReference type="PIRSF" id="PIRSF002599">
    <property type="entry name" value="Cold_shock_A"/>
    <property type="match status" value="1"/>
</dbReference>
<dbReference type="PRINTS" id="PR00050">
    <property type="entry name" value="COLDSHOCK"/>
</dbReference>
<dbReference type="SMART" id="SM00357">
    <property type="entry name" value="CSP"/>
    <property type="match status" value="1"/>
</dbReference>
<dbReference type="SUPFAM" id="SSF50249">
    <property type="entry name" value="Nucleic acid-binding proteins"/>
    <property type="match status" value="1"/>
</dbReference>
<dbReference type="PROSITE" id="PS00352">
    <property type="entry name" value="CSD_1"/>
    <property type="match status" value="1"/>
</dbReference>
<dbReference type="PROSITE" id="PS51857">
    <property type="entry name" value="CSD_2"/>
    <property type="match status" value="1"/>
</dbReference>
<accession>Q46051</accession>
<accession>Q45969</accession>
<protein>
    <recommendedName>
        <fullName>Major cold shock protein</fullName>
    </recommendedName>
</protein>
<keyword id="KW-0010">Activator</keyword>
<keyword id="KW-0963">Cytoplasm</keyword>
<keyword id="KW-0238">DNA-binding</keyword>
<keyword id="KW-0346">Stress response</keyword>
<keyword id="KW-0804">Transcription</keyword>
<keyword id="KW-0805">Transcription regulation</keyword>
<sequence length="46" mass="4983">DKGFGFITPDDGSKDVFVHFSAIQNDGYKSLDEGQKVSFTIESGAK</sequence>
<organism>
    <name type="scientific">Citrobacter freundii</name>
    <dbReference type="NCBI Taxonomy" id="546"/>
    <lineage>
        <taxon>Bacteria</taxon>
        <taxon>Pseudomonadati</taxon>
        <taxon>Pseudomonadota</taxon>
        <taxon>Gammaproteobacteria</taxon>
        <taxon>Enterobacterales</taxon>
        <taxon>Enterobacteriaceae</taxon>
        <taxon>Citrobacter</taxon>
        <taxon>Citrobacter freundii complex</taxon>
    </lineage>
</organism>
<comment type="subunit">
    <text evidence="1">Homodimer.</text>
</comment>
<comment type="subcellular location">
    <subcellularLocation>
        <location evidence="1">Cytoplasm</location>
    </subcellularLocation>
</comment>
<comment type="induction">
    <text evidence="1">In response to low temperature.</text>
</comment>
<name>CSPA_CITFR</name>
<feature type="chain" id="PRO_0000100302" description="Major cold shock protein">
    <location>
        <begin position="1" status="less than"/>
        <end position="46" status="greater than"/>
    </location>
</feature>
<feature type="domain" description="CSD">
    <location>
        <begin position="1" status="less than"/>
        <end position="46" status="greater than"/>
    </location>
</feature>
<feature type="non-terminal residue">
    <location>
        <position position="1"/>
    </location>
</feature>
<feature type="non-terminal residue">
    <location>
        <position position="46"/>
    </location>
</feature>
<gene>
    <name type="primary">cspA</name>
</gene>